<protein>
    <recommendedName>
        <fullName evidence="1">Structure-specific endonuclease subunit slx4</fullName>
    </recommendedName>
</protein>
<organism>
    <name type="scientific">Aspergillus fumigatus (strain CBS 144.89 / FGSC A1163 / CEA10)</name>
    <name type="common">Neosartorya fumigata</name>
    <dbReference type="NCBI Taxonomy" id="451804"/>
    <lineage>
        <taxon>Eukaryota</taxon>
        <taxon>Fungi</taxon>
        <taxon>Dikarya</taxon>
        <taxon>Ascomycota</taxon>
        <taxon>Pezizomycotina</taxon>
        <taxon>Eurotiomycetes</taxon>
        <taxon>Eurotiomycetidae</taxon>
        <taxon>Eurotiales</taxon>
        <taxon>Aspergillaceae</taxon>
        <taxon>Aspergillus</taxon>
        <taxon>Aspergillus subgen. Fumigati</taxon>
    </lineage>
</organism>
<gene>
    <name type="primary">slx4</name>
    <name type="ORF">AFUB_020270</name>
</gene>
<reference key="1">
    <citation type="journal article" date="2008" name="PLoS Genet.">
        <title>Genomic islands in the pathogenic filamentous fungus Aspergillus fumigatus.</title>
        <authorList>
            <person name="Fedorova N.D."/>
            <person name="Khaldi N."/>
            <person name="Joardar V.S."/>
            <person name="Maiti R."/>
            <person name="Amedeo P."/>
            <person name="Anderson M.J."/>
            <person name="Crabtree J."/>
            <person name="Silva J.C."/>
            <person name="Badger J.H."/>
            <person name="Albarraq A."/>
            <person name="Angiuoli S."/>
            <person name="Bussey H."/>
            <person name="Bowyer P."/>
            <person name="Cotty P.J."/>
            <person name="Dyer P.S."/>
            <person name="Egan A."/>
            <person name="Galens K."/>
            <person name="Fraser-Liggett C.M."/>
            <person name="Haas B.J."/>
            <person name="Inman J.M."/>
            <person name="Kent R."/>
            <person name="Lemieux S."/>
            <person name="Malavazi I."/>
            <person name="Orvis J."/>
            <person name="Roemer T."/>
            <person name="Ronning C.M."/>
            <person name="Sundaram J.P."/>
            <person name="Sutton G."/>
            <person name="Turner G."/>
            <person name="Venter J.C."/>
            <person name="White O.R."/>
            <person name="Whitty B.R."/>
            <person name="Youngman P."/>
            <person name="Wolfe K.H."/>
            <person name="Goldman G.H."/>
            <person name="Wortman J.R."/>
            <person name="Jiang B."/>
            <person name="Denning D.W."/>
            <person name="Nierman W.C."/>
        </authorList>
    </citation>
    <scope>NUCLEOTIDE SEQUENCE [LARGE SCALE GENOMIC DNA]</scope>
    <source>
        <strain>CBS 144.89 / FGSC A1163 / CEA10</strain>
    </source>
</reference>
<evidence type="ECO:0000255" key="1">
    <source>
        <dbReference type="HAMAP-Rule" id="MF_03110"/>
    </source>
</evidence>
<evidence type="ECO:0000256" key="2">
    <source>
        <dbReference type="SAM" id="MobiDB-lite"/>
    </source>
</evidence>
<dbReference type="EMBL" id="DS499595">
    <property type="protein sequence ID" value="EDP53981.1"/>
    <property type="molecule type" value="Genomic_DNA"/>
</dbReference>
<dbReference type="SMR" id="B0XUC7"/>
<dbReference type="EnsemblFungi" id="EDP53981">
    <property type="protein sequence ID" value="EDP53981"/>
    <property type="gene ID" value="AFUB_020270"/>
</dbReference>
<dbReference type="VEuPathDB" id="FungiDB:AFUB_020270"/>
<dbReference type="HOGENOM" id="CLU_016773_0_0_1"/>
<dbReference type="OrthoDB" id="119431at5052"/>
<dbReference type="PhylomeDB" id="B0XUC7"/>
<dbReference type="Proteomes" id="UP000001699">
    <property type="component" value="Unassembled WGS sequence"/>
</dbReference>
<dbReference type="GO" id="GO:0033557">
    <property type="term" value="C:Slx1-Slx4 complex"/>
    <property type="evidence" value="ECO:0007669"/>
    <property type="project" value="UniProtKB-UniRule"/>
</dbReference>
<dbReference type="GO" id="GO:0017108">
    <property type="term" value="F:5'-flap endonuclease activity"/>
    <property type="evidence" value="ECO:0007669"/>
    <property type="project" value="InterPro"/>
</dbReference>
<dbReference type="GO" id="GO:0006310">
    <property type="term" value="P:DNA recombination"/>
    <property type="evidence" value="ECO:0007669"/>
    <property type="project" value="UniProtKB-UniRule"/>
</dbReference>
<dbReference type="GO" id="GO:0006281">
    <property type="term" value="P:DNA repair"/>
    <property type="evidence" value="ECO:0007669"/>
    <property type="project" value="UniProtKB-UniRule"/>
</dbReference>
<dbReference type="GO" id="GO:0006260">
    <property type="term" value="P:DNA replication"/>
    <property type="evidence" value="ECO:0007669"/>
    <property type="project" value="InterPro"/>
</dbReference>
<dbReference type="CDD" id="cd22999">
    <property type="entry name" value="SAP_SLX4"/>
    <property type="match status" value="1"/>
</dbReference>
<dbReference type="HAMAP" id="MF_03110">
    <property type="entry name" value="Endonuc_su_Slx4"/>
    <property type="match status" value="1"/>
</dbReference>
<dbReference type="InterPro" id="IPR027784">
    <property type="entry name" value="Slx4_ascomycetes"/>
</dbReference>
<dbReference type="InterPro" id="IPR018574">
    <property type="entry name" value="Structure-sp_endonuc_su_Slx4"/>
</dbReference>
<dbReference type="Pfam" id="PF09494">
    <property type="entry name" value="Slx4"/>
    <property type="match status" value="1"/>
</dbReference>
<comment type="function">
    <text evidence="1">Regulatory subunit of the slx1-slx4 structure-specific endonuclease that resolves DNA secondary structures generated during DNA repair and recombination. Has endonuclease activity towards branched DNA substrates, introducing single-strand cuts in duplex DNA close to junctions with ss-DNA.</text>
</comment>
<comment type="subunit">
    <text evidence="1">Forms a heterodimer with slx1.</text>
</comment>
<comment type="subcellular location">
    <subcellularLocation>
        <location evidence="1">Nucleus</location>
    </subcellularLocation>
</comment>
<comment type="PTM">
    <text evidence="1">Phosphorylated in response to DNA damage.</text>
</comment>
<comment type="similarity">
    <text evidence="1">Belongs to the SLX4 family.</text>
</comment>
<keyword id="KW-0227">DNA damage</keyword>
<keyword id="KW-0233">DNA recombination</keyword>
<keyword id="KW-0234">DNA repair</keyword>
<keyword id="KW-0539">Nucleus</keyword>
<keyword id="KW-0597">Phosphoprotein</keyword>
<sequence>MCTTTDVVVLSSSPDQIRSCSLANPKCGAEKAFVLSPVSSSPSSLPSSSDLFQPPTRSRFFKPGGGNEGSSRTAREESETGTKQNDLAASRKKAAVRGGRQKRTKEQPPNESQTLFDNPEPPIPKHNGCTSKKGTGSRKKRIDAASKCTKSGSKKITGKVTKPGITETTKFENKTKIVTSDVSPGKSPANKLELEKDGLQIEVAMKRRLDWTPTKDTGKQAVALDDTGDNKTRFGELLSEYGFLKAAAVSQTDSKLSDGAPTKCRRLELVDTHNPSTSKRTSPDADSDRSNVRSTRSSRAPAAEGKSKKRSRKITTLTGRVTALYTKDCTDHLDAANTMIRASEDVSSKLLSKSLDLDSCVLAPGDAVDYLQDQDLIFGTCSQLEREDSPTMLRDMQKEICASKNSMIENRKPSSTTRAGSGLYSHTTVSRFQTQRDLWSVAARDMDGSLAEIEVLDMVDITDVSELPPKPNGELPDRSEKNDEDTVSQGESSRPIEITDDFGVEVDVRMEYLATSETKPEETAYAASEIRPMPRFADWKDSDLSRQVRLYGFKPMKNRRKMIEVLERCWKAQHSSTRTGVQYAPGKPDDGSTGKAGTIGSQMNKQSSKMDAAEKMRRESACLKEKAKSSTALEDKLSHATDRSSQMLTKSSFAHMEEIEDSEDEVIPSPSQLQSLYKRHISESRSSHPLPVSDTPSTPSSRTRTNADSDTKPSPSDSATESSLPDLASQITKAVRLQPRSFSVDCKRPSWHEKILMYDPIILEDFATWLNIEGLGLVHEDREVSAEFVRQWCESNGICCGFRKNSRRSER</sequence>
<feature type="chain" id="PRO_0000388015" description="Structure-specific endonuclease subunit slx4">
    <location>
        <begin position="1"/>
        <end position="811"/>
    </location>
</feature>
<feature type="region of interest" description="Disordered" evidence="2">
    <location>
        <begin position="36"/>
        <end position="161"/>
    </location>
</feature>
<feature type="region of interest" description="Disordered" evidence="2">
    <location>
        <begin position="266"/>
        <end position="312"/>
    </location>
</feature>
<feature type="region of interest" description="Disordered" evidence="2">
    <location>
        <begin position="464"/>
        <end position="498"/>
    </location>
</feature>
<feature type="region of interest" description="Disordered" evidence="2">
    <location>
        <begin position="579"/>
        <end position="649"/>
    </location>
</feature>
<feature type="region of interest" description="Disordered" evidence="2">
    <location>
        <begin position="680"/>
        <end position="726"/>
    </location>
</feature>
<feature type="compositionally biased region" description="Low complexity" evidence="2">
    <location>
        <begin position="36"/>
        <end position="49"/>
    </location>
</feature>
<feature type="compositionally biased region" description="Basic residues" evidence="2">
    <location>
        <begin position="90"/>
        <end position="103"/>
    </location>
</feature>
<feature type="compositionally biased region" description="Polar residues" evidence="2">
    <location>
        <begin position="107"/>
        <end position="116"/>
    </location>
</feature>
<feature type="compositionally biased region" description="Basic and acidic residues" evidence="2">
    <location>
        <begin position="281"/>
        <end position="291"/>
    </location>
</feature>
<feature type="compositionally biased region" description="Polar residues" evidence="2">
    <location>
        <begin position="599"/>
        <end position="609"/>
    </location>
</feature>
<feature type="compositionally biased region" description="Basic and acidic residues" evidence="2">
    <location>
        <begin position="611"/>
        <end position="642"/>
    </location>
</feature>
<feature type="compositionally biased region" description="Low complexity" evidence="2">
    <location>
        <begin position="689"/>
        <end position="704"/>
    </location>
</feature>
<feature type="compositionally biased region" description="Polar residues" evidence="2">
    <location>
        <begin position="712"/>
        <end position="723"/>
    </location>
</feature>
<proteinExistence type="inferred from homology"/>
<name>SLX4_ASPFC</name>
<accession>B0XUC7</accession>